<reference key="1">
    <citation type="submission" date="2006-08" db="EMBL/GenBank/DDBJ databases">
        <title>Complete sequence of Alkalilimnicola ehrilichei MLHE-1.</title>
        <authorList>
            <person name="Copeland A."/>
            <person name="Lucas S."/>
            <person name="Lapidus A."/>
            <person name="Barry K."/>
            <person name="Detter J.C."/>
            <person name="Glavina del Rio T."/>
            <person name="Hammon N."/>
            <person name="Israni S."/>
            <person name="Dalin E."/>
            <person name="Tice H."/>
            <person name="Pitluck S."/>
            <person name="Sims D."/>
            <person name="Brettin T."/>
            <person name="Bruce D."/>
            <person name="Han C."/>
            <person name="Tapia R."/>
            <person name="Gilna P."/>
            <person name="Schmutz J."/>
            <person name="Larimer F."/>
            <person name="Land M."/>
            <person name="Hauser L."/>
            <person name="Kyrpides N."/>
            <person name="Mikhailova N."/>
            <person name="Oremland R.S."/>
            <person name="Hoeft S.E."/>
            <person name="Switzer-Blum J."/>
            <person name="Kulp T."/>
            <person name="King G."/>
            <person name="Tabita R."/>
            <person name="Witte B."/>
            <person name="Santini J.M."/>
            <person name="Basu P."/>
            <person name="Hollibaugh J.T."/>
            <person name="Xie G."/>
            <person name="Stolz J.F."/>
            <person name="Richardson P."/>
        </authorList>
    </citation>
    <scope>NUCLEOTIDE SEQUENCE [LARGE SCALE GENOMIC DNA]</scope>
    <source>
        <strain>ATCC BAA-1101 / DSM 17681 / MLHE-1</strain>
    </source>
</reference>
<proteinExistence type="inferred from homology"/>
<accession>Q0ABI6</accession>
<comment type="function">
    <text evidence="1">Forms part of the ribosomal stalk which helps the ribosome interact with GTP-bound translation factors.</text>
</comment>
<comment type="subunit">
    <text evidence="1">Part of the ribosomal stalk of the 50S ribosomal subunit. Interacts with L10 and the large rRNA to form the base of the stalk. L10 forms an elongated spine to which L12 dimers bind in a sequential fashion forming a multimeric L10(L12)X complex.</text>
</comment>
<comment type="PTM">
    <text evidence="1">One or more lysine residues are methylated.</text>
</comment>
<comment type="similarity">
    <text evidence="1">Belongs to the universal ribosomal protein uL11 family.</text>
</comment>
<name>RL11_ALKEH</name>
<organism>
    <name type="scientific">Alkalilimnicola ehrlichii (strain ATCC BAA-1101 / DSM 17681 / MLHE-1)</name>
    <dbReference type="NCBI Taxonomy" id="187272"/>
    <lineage>
        <taxon>Bacteria</taxon>
        <taxon>Pseudomonadati</taxon>
        <taxon>Pseudomonadota</taxon>
        <taxon>Gammaproteobacteria</taxon>
        <taxon>Chromatiales</taxon>
        <taxon>Ectothiorhodospiraceae</taxon>
        <taxon>Alkalilimnicola</taxon>
    </lineage>
</organism>
<protein>
    <recommendedName>
        <fullName evidence="1">Large ribosomal subunit protein uL11</fullName>
    </recommendedName>
    <alternativeName>
        <fullName evidence="2">50S ribosomal protein L11</fullName>
    </alternativeName>
</protein>
<feature type="chain" id="PRO_1000046135" description="Large ribosomal subunit protein uL11">
    <location>
        <begin position="1"/>
        <end position="143"/>
    </location>
</feature>
<sequence>MAKKVSAYIKLQVGAGKANPSPPVGPALGQHGVNIMEFCKAFNAQTQEMEAGLPVPVVITVYNDRSFTFITKTPPAAVLLRKAAGIQKGSGEPNTKKVGTVTREQLEEIAKTKEPDLNAADLDAAVRSIAGTARSMGLDVEGL</sequence>
<keyword id="KW-0488">Methylation</keyword>
<keyword id="KW-1185">Reference proteome</keyword>
<keyword id="KW-0687">Ribonucleoprotein</keyword>
<keyword id="KW-0689">Ribosomal protein</keyword>
<keyword id="KW-0694">RNA-binding</keyword>
<keyword id="KW-0699">rRNA-binding</keyword>
<evidence type="ECO:0000255" key="1">
    <source>
        <dbReference type="HAMAP-Rule" id="MF_00736"/>
    </source>
</evidence>
<evidence type="ECO:0000305" key="2"/>
<dbReference type="EMBL" id="CP000453">
    <property type="protein sequence ID" value="ABI55801.1"/>
    <property type="molecule type" value="Genomic_DNA"/>
</dbReference>
<dbReference type="RefSeq" id="WP_011628197.1">
    <property type="nucleotide sequence ID" value="NC_008340.1"/>
</dbReference>
<dbReference type="SMR" id="Q0ABI6"/>
<dbReference type="KEGG" id="aeh:Mlg_0447"/>
<dbReference type="eggNOG" id="COG0080">
    <property type="taxonomic scope" value="Bacteria"/>
</dbReference>
<dbReference type="HOGENOM" id="CLU_074237_2_0_6"/>
<dbReference type="OrthoDB" id="9802408at2"/>
<dbReference type="Proteomes" id="UP000001962">
    <property type="component" value="Chromosome"/>
</dbReference>
<dbReference type="GO" id="GO:0022625">
    <property type="term" value="C:cytosolic large ribosomal subunit"/>
    <property type="evidence" value="ECO:0007669"/>
    <property type="project" value="TreeGrafter"/>
</dbReference>
<dbReference type="GO" id="GO:0070180">
    <property type="term" value="F:large ribosomal subunit rRNA binding"/>
    <property type="evidence" value="ECO:0007669"/>
    <property type="project" value="UniProtKB-UniRule"/>
</dbReference>
<dbReference type="GO" id="GO:0003735">
    <property type="term" value="F:structural constituent of ribosome"/>
    <property type="evidence" value="ECO:0007669"/>
    <property type="project" value="InterPro"/>
</dbReference>
<dbReference type="GO" id="GO:0006412">
    <property type="term" value="P:translation"/>
    <property type="evidence" value="ECO:0007669"/>
    <property type="project" value="UniProtKB-UniRule"/>
</dbReference>
<dbReference type="CDD" id="cd00349">
    <property type="entry name" value="Ribosomal_L11"/>
    <property type="match status" value="1"/>
</dbReference>
<dbReference type="FunFam" id="1.10.10.250:FF:000001">
    <property type="entry name" value="50S ribosomal protein L11"/>
    <property type="match status" value="1"/>
</dbReference>
<dbReference type="FunFam" id="3.30.1550.10:FF:000001">
    <property type="entry name" value="50S ribosomal protein L11"/>
    <property type="match status" value="1"/>
</dbReference>
<dbReference type="Gene3D" id="1.10.10.250">
    <property type="entry name" value="Ribosomal protein L11, C-terminal domain"/>
    <property type="match status" value="1"/>
</dbReference>
<dbReference type="Gene3D" id="3.30.1550.10">
    <property type="entry name" value="Ribosomal protein L11/L12, N-terminal domain"/>
    <property type="match status" value="1"/>
</dbReference>
<dbReference type="HAMAP" id="MF_00736">
    <property type="entry name" value="Ribosomal_uL11"/>
    <property type="match status" value="1"/>
</dbReference>
<dbReference type="InterPro" id="IPR000911">
    <property type="entry name" value="Ribosomal_uL11"/>
</dbReference>
<dbReference type="InterPro" id="IPR006519">
    <property type="entry name" value="Ribosomal_uL11_bac-typ"/>
</dbReference>
<dbReference type="InterPro" id="IPR020783">
    <property type="entry name" value="Ribosomal_uL11_C"/>
</dbReference>
<dbReference type="InterPro" id="IPR036769">
    <property type="entry name" value="Ribosomal_uL11_C_sf"/>
</dbReference>
<dbReference type="InterPro" id="IPR020785">
    <property type="entry name" value="Ribosomal_uL11_CS"/>
</dbReference>
<dbReference type="InterPro" id="IPR020784">
    <property type="entry name" value="Ribosomal_uL11_N"/>
</dbReference>
<dbReference type="InterPro" id="IPR036796">
    <property type="entry name" value="Ribosomal_uL11_N_sf"/>
</dbReference>
<dbReference type="NCBIfam" id="TIGR01632">
    <property type="entry name" value="L11_bact"/>
    <property type="match status" value="1"/>
</dbReference>
<dbReference type="PANTHER" id="PTHR11661">
    <property type="entry name" value="60S RIBOSOMAL PROTEIN L12"/>
    <property type="match status" value="1"/>
</dbReference>
<dbReference type="PANTHER" id="PTHR11661:SF1">
    <property type="entry name" value="LARGE RIBOSOMAL SUBUNIT PROTEIN UL11M"/>
    <property type="match status" value="1"/>
</dbReference>
<dbReference type="Pfam" id="PF00298">
    <property type="entry name" value="Ribosomal_L11"/>
    <property type="match status" value="1"/>
</dbReference>
<dbReference type="Pfam" id="PF03946">
    <property type="entry name" value="Ribosomal_L11_N"/>
    <property type="match status" value="1"/>
</dbReference>
<dbReference type="SMART" id="SM00649">
    <property type="entry name" value="RL11"/>
    <property type="match status" value="1"/>
</dbReference>
<dbReference type="SUPFAM" id="SSF54747">
    <property type="entry name" value="Ribosomal L11/L12e N-terminal domain"/>
    <property type="match status" value="1"/>
</dbReference>
<dbReference type="SUPFAM" id="SSF46906">
    <property type="entry name" value="Ribosomal protein L11, C-terminal domain"/>
    <property type="match status" value="1"/>
</dbReference>
<dbReference type="PROSITE" id="PS00359">
    <property type="entry name" value="RIBOSOMAL_L11"/>
    <property type="match status" value="1"/>
</dbReference>
<gene>
    <name evidence="1" type="primary">rplK</name>
    <name type="ordered locus">Mlg_0447</name>
</gene>